<organism>
    <name type="scientific">Bacillus caldotenax</name>
    <dbReference type="NCBI Taxonomy" id="1395"/>
    <lineage>
        <taxon>Bacteria</taxon>
        <taxon>Bacillati</taxon>
        <taxon>Bacillota</taxon>
        <taxon>Bacilli</taxon>
        <taxon>Bacillales</taxon>
        <taxon>Anoxybacillaceae</taxon>
        <taxon>Geobacillus</taxon>
        <taxon>Geobacillus thermoleovorans group</taxon>
    </lineage>
</organism>
<proteinExistence type="evidence at protein level"/>
<feature type="chain" id="PRO_0000202086" description="Proton/sodium-glutamate symport protein">
    <location>
        <begin position="1"/>
        <end position="421"/>
    </location>
</feature>
<feature type="topological domain" description="Cytoplasmic" evidence="1">
    <location>
        <begin position="1"/>
        <end position="3"/>
    </location>
</feature>
<feature type="transmembrane region" description="Helical" evidence="1">
    <location>
        <begin position="4"/>
        <end position="24"/>
    </location>
</feature>
<feature type="topological domain" description="Extracellular" evidence="1">
    <location>
        <begin position="25"/>
        <end position="43"/>
    </location>
</feature>
<feature type="transmembrane region" description="Helical" evidence="1">
    <location>
        <begin position="44"/>
        <end position="64"/>
    </location>
</feature>
<feature type="topological domain" description="Cytoplasmic" evidence="1">
    <location>
        <begin position="65"/>
        <end position="77"/>
    </location>
</feature>
<feature type="transmembrane region" description="Helical" evidence="1">
    <location>
        <begin position="78"/>
        <end position="98"/>
    </location>
</feature>
<feature type="topological domain" description="Extracellular" evidence="1">
    <location>
        <begin position="99"/>
        <end position="148"/>
    </location>
</feature>
<feature type="transmembrane region" description="Helical" evidence="1">
    <location>
        <begin position="149"/>
        <end position="169"/>
    </location>
</feature>
<feature type="topological domain" description="Cytoplasmic" evidence="1">
    <location>
        <begin position="170"/>
        <end position="198"/>
    </location>
</feature>
<feature type="transmembrane region" description="Helical" evidence="1">
    <location>
        <begin position="199"/>
        <end position="219"/>
    </location>
</feature>
<feature type="topological domain" description="Extracellular" evidence="1">
    <location>
        <begin position="220"/>
        <end position="222"/>
    </location>
</feature>
<feature type="transmembrane region" description="Helical" evidence="1">
    <location>
        <begin position="223"/>
        <end position="243"/>
    </location>
</feature>
<feature type="topological domain" description="Cytoplasmic" evidence="1">
    <location>
        <position position="244"/>
    </location>
</feature>
<feature type="transmembrane region" description="Helical" evidence="1">
    <location>
        <begin position="245"/>
        <end position="265"/>
    </location>
</feature>
<feature type="topological domain" description="Extracellular" evidence="1">
    <location>
        <begin position="266"/>
        <end position="306"/>
    </location>
</feature>
<feature type="transmembrane region" description="Helical" evidence="1">
    <location>
        <begin position="307"/>
        <end position="327"/>
    </location>
</feature>
<feature type="topological domain" description="Cytoplasmic" evidence="1">
    <location>
        <begin position="328"/>
        <end position="330"/>
    </location>
</feature>
<feature type="transmembrane region" description="Helical" evidence="1">
    <location>
        <begin position="331"/>
        <end position="351"/>
    </location>
</feature>
<feature type="transmembrane region" description="Helical" evidence="1">
    <location>
        <begin position="352"/>
        <end position="372"/>
    </location>
</feature>
<feature type="topological domain" description="Cytoplasmic" evidence="1">
    <location>
        <begin position="373"/>
        <end position="421"/>
    </location>
</feature>
<keyword id="KW-1003">Cell membrane</keyword>
<keyword id="KW-0472">Membrane</keyword>
<keyword id="KW-0769">Symport</keyword>
<keyword id="KW-0812">Transmembrane</keyword>
<keyword id="KW-1133">Transmembrane helix</keyword>
<keyword id="KW-0813">Transport</keyword>
<name>GLTT_BACCA</name>
<gene>
    <name type="primary">gltT</name>
</gene>
<reference key="1">
    <citation type="journal article" date="1992" name="Mol. Microbiol.">
        <title>Characterization and functional expression in Escherichia coli of the sodium/proton/glutamate symport proteins of Bacillus stearothermophilus and Bacillus caldotenax.</title>
        <authorList>
            <person name="Tolner B."/>
            <person name="Poolman B."/>
            <person name="Konings W.N."/>
        </authorList>
    </citation>
    <scope>NUCLEOTIDE SEQUENCE [GENOMIC DNA]</scope>
</reference>
<reference key="2">
    <citation type="journal article" date="1995" name="Mol. Microbiol.">
        <title>Cation-selectivity of the L-glutamate transporters of Escherichia coli, Bacillus stearothermophilus and Bacillus caldotenax: dependence on the environment in which the proteins are expressed.</title>
        <authorList>
            <person name="Tolner B."/>
            <person name="Ubbink-Kok T."/>
            <person name="Poolman B."/>
            <person name="Konings W.N."/>
        </authorList>
    </citation>
    <scope>FUNCTION</scope>
</reference>
<reference key="3">
    <citation type="journal article" date="2003" name="Biochemistry">
        <title>Trimeric subunit stoichiometry of the glutamate transporters from Bacillus caldotenax and Bacillus stearothermophilus.</title>
        <authorList>
            <person name="Yernool D."/>
            <person name="Boudker O."/>
            <person name="Folta-Stogniew E."/>
            <person name="Gouaux E."/>
        </authorList>
    </citation>
    <scope>SUBUNIT</scope>
</reference>
<protein>
    <recommendedName>
        <fullName>Proton/sodium-glutamate symport protein</fullName>
    </recommendedName>
    <alternativeName>
        <fullName>Glutamate-aspartate carrier protein</fullName>
    </alternativeName>
</protein>
<evidence type="ECO:0000255" key="1"/>
<evidence type="ECO:0000269" key="2">
    <source>
    </source>
</evidence>
<evidence type="ECO:0000269" key="3">
    <source>
    </source>
</evidence>
<evidence type="ECO:0000305" key="4"/>
<dbReference type="EMBL" id="M86509">
    <property type="protein sequence ID" value="AAA22493.1"/>
    <property type="molecule type" value="Genomic_DNA"/>
</dbReference>
<dbReference type="PIR" id="S26246">
    <property type="entry name" value="S26246"/>
</dbReference>
<dbReference type="SMR" id="P24944"/>
<dbReference type="GO" id="GO:0005886">
    <property type="term" value="C:plasma membrane"/>
    <property type="evidence" value="ECO:0007669"/>
    <property type="project" value="UniProtKB-SubCell"/>
</dbReference>
<dbReference type="GO" id="GO:0015293">
    <property type="term" value="F:symporter activity"/>
    <property type="evidence" value="ECO:0007669"/>
    <property type="project" value="UniProtKB-KW"/>
</dbReference>
<dbReference type="GO" id="GO:0006835">
    <property type="term" value="P:dicarboxylic acid transport"/>
    <property type="evidence" value="ECO:0007669"/>
    <property type="project" value="TreeGrafter"/>
</dbReference>
<dbReference type="FunFam" id="1.10.3860.10:FF:000001">
    <property type="entry name" value="C4-dicarboxylate transport protein"/>
    <property type="match status" value="1"/>
</dbReference>
<dbReference type="Gene3D" id="1.10.3860.10">
    <property type="entry name" value="Sodium:dicarboxylate symporter"/>
    <property type="match status" value="1"/>
</dbReference>
<dbReference type="InterPro" id="IPR001991">
    <property type="entry name" value="Na-dicarboxylate_symporter"/>
</dbReference>
<dbReference type="InterPro" id="IPR018107">
    <property type="entry name" value="Na-dicarboxylate_symporter_CS"/>
</dbReference>
<dbReference type="InterPro" id="IPR036458">
    <property type="entry name" value="Na:dicarbo_symporter_sf"/>
</dbReference>
<dbReference type="NCBIfam" id="NF008440">
    <property type="entry name" value="PRK11283.1"/>
    <property type="match status" value="1"/>
</dbReference>
<dbReference type="PANTHER" id="PTHR42865">
    <property type="entry name" value="PROTON/GLUTAMATE-ASPARTATE SYMPORTER"/>
    <property type="match status" value="1"/>
</dbReference>
<dbReference type="PANTHER" id="PTHR42865:SF7">
    <property type="entry name" value="PROTON_GLUTAMATE-ASPARTATE SYMPORTER"/>
    <property type="match status" value="1"/>
</dbReference>
<dbReference type="Pfam" id="PF00375">
    <property type="entry name" value="SDF"/>
    <property type="match status" value="1"/>
</dbReference>
<dbReference type="PRINTS" id="PR00173">
    <property type="entry name" value="EDTRNSPORT"/>
</dbReference>
<dbReference type="SUPFAM" id="SSF118215">
    <property type="entry name" value="Proton glutamate symport protein"/>
    <property type="match status" value="1"/>
</dbReference>
<dbReference type="PROSITE" id="PS00713">
    <property type="entry name" value="NA_DICARBOXYL_SYMP_1"/>
    <property type="match status" value="1"/>
</dbReference>
<dbReference type="PROSITE" id="PS00714">
    <property type="entry name" value="NA_DICARBOXYL_SYMP_2"/>
    <property type="match status" value="1"/>
</dbReference>
<comment type="function">
    <text evidence="3">This carrier protein is part of the Na(+)-dependent, binding-protein-independent glutamate-aspartate transport system.</text>
</comment>
<comment type="subunit">
    <text evidence="2">Homotrimer.</text>
</comment>
<comment type="subcellular location">
    <subcellularLocation>
        <location>Cell membrane</location>
        <topology>Multi-pass membrane protein</topology>
    </subcellularLocation>
</comment>
<comment type="similarity">
    <text evidence="4">Belongs to the dicarboxylate/amino acid:cation symporter (DAACS) (TC 2.A.23) family.</text>
</comment>
<accession>P24944</accession>
<sequence length="421" mass="45345">MRKIGLAWQIFIGLILGIIVGAIFYGNPKVAAYLQPIGDIFLRLIKMIVIPIVISSLVVGVASVGDLKKLGKLGGKTIIYFEIITTIAIVVGLLAANIFQPGAGVNMKSLEKTDIQSYVDTTNEVQHHSMVETFVNIVPKNIFESLSTGDMLPIIFFSVMFGLGVAAIGEKGKPVLQFFQGTAEAMFYVTNQIMKFAPFGVFALIGVTVSKFGVESLIPLSKLVIVVYATMLFFIFAVLGGVAKLFGINIFHIIKILKDELILAYSTASSETVLPRIMDKMEKFGCPKAITSFVIPTGYSFNLDGSTLYQALAAIFIAQLYGIDMSVSQQISLLLVLMVTSKGIAGVPGVSFVVLLATLGTVGIPVEGLAFIAGIDRILDMARTAVNVIGNSLAAIIMSKWEGQYNEEKGKQYLAELQQSA</sequence>